<reference key="1">
    <citation type="journal article" date="2010" name="Genome Biol.">
        <title>Structure and dynamics of the pan-genome of Streptococcus pneumoniae and closely related species.</title>
        <authorList>
            <person name="Donati C."/>
            <person name="Hiller N.L."/>
            <person name="Tettelin H."/>
            <person name="Muzzi A."/>
            <person name="Croucher N.J."/>
            <person name="Angiuoli S.V."/>
            <person name="Oggioni M."/>
            <person name="Dunning Hotopp J.C."/>
            <person name="Hu F.Z."/>
            <person name="Riley D.R."/>
            <person name="Covacci A."/>
            <person name="Mitchell T.J."/>
            <person name="Bentley S.D."/>
            <person name="Kilian M."/>
            <person name="Ehrlich G.D."/>
            <person name="Rappuoli R."/>
            <person name="Moxon E.R."/>
            <person name="Masignani V."/>
        </authorList>
    </citation>
    <scope>NUCLEOTIDE SEQUENCE [LARGE SCALE GENOMIC DNA]</scope>
    <source>
        <strain>JJA</strain>
    </source>
</reference>
<dbReference type="EC" id="6.5.1.2" evidence="1"/>
<dbReference type="EMBL" id="CP000919">
    <property type="protein sequence ID" value="ACO18100.1"/>
    <property type="molecule type" value="Genomic_DNA"/>
</dbReference>
<dbReference type="RefSeq" id="WP_001042568.1">
    <property type="nucleotide sequence ID" value="NC_012466.1"/>
</dbReference>
<dbReference type="SMR" id="C1CEA4"/>
<dbReference type="KEGG" id="sjj:SPJ_1055"/>
<dbReference type="HOGENOM" id="CLU_007764_2_1_9"/>
<dbReference type="Proteomes" id="UP000002206">
    <property type="component" value="Chromosome"/>
</dbReference>
<dbReference type="GO" id="GO:0005829">
    <property type="term" value="C:cytosol"/>
    <property type="evidence" value="ECO:0007669"/>
    <property type="project" value="TreeGrafter"/>
</dbReference>
<dbReference type="GO" id="GO:0003677">
    <property type="term" value="F:DNA binding"/>
    <property type="evidence" value="ECO:0007669"/>
    <property type="project" value="InterPro"/>
</dbReference>
<dbReference type="GO" id="GO:0003911">
    <property type="term" value="F:DNA ligase (NAD+) activity"/>
    <property type="evidence" value="ECO:0007669"/>
    <property type="project" value="UniProtKB-UniRule"/>
</dbReference>
<dbReference type="GO" id="GO:0046872">
    <property type="term" value="F:metal ion binding"/>
    <property type="evidence" value="ECO:0007669"/>
    <property type="project" value="UniProtKB-KW"/>
</dbReference>
<dbReference type="GO" id="GO:0006281">
    <property type="term" value="P:DNA repair"/>
    <property type="evidence" value="ECO:0007669"/>
    <property type="project" value="UniProtKB-KW"/>
</dbReference>
<dbReference type="GO" id="GO:0006260">
    <property type="term" value="P:DNA replication"/>
    <property type="evidence" value="ECO:0007669"/>
    <property type="project" value="UniProtKB-KW"/>
</dbReference>
<dbReference type="CDD" id="cd17748">
    <property type="entry name" value="BRCT_DNA_ligase_like"/>
    <property type="match status" value="1"/>
</dbReference>
<dbReference type="CDD" id="cd00114">
    <property type="entry name" value="LIGANc"/>
    <property type="match status" value="1"/>
</dbReference>
<dbReference type="FunFam" id="1.10.150.20:FF:000006">
    <property type="entry name" value="DNA ligase"/>
    <property type="match status" value="1"/>
</dbReference>
<dbReference type="FunFam" id="1.10.150.20:FF:000007">
    <property type="entry name" value="DNA ligase"/>
    <property type="match status" value="1"/>
</dbReference>
<dbReference type="FunFam" id="1.10.287.610:FF:000002">
    <property type="entry name" value="DNA ligase"/>
    <property type="match status" value="1"/>
</dbReference>
<dbReference type="FunFam" id="2.40.50.140:FF:000012">
    <property type="entry name" value="DNA ligase"/>
    <property type="match status" value="1"/>
</dbReference>
<dbReference type="FunFam" id="3.30.470.30:FF:000001">
    <property type="entry name" value="DNA ligase"/>
    <property type="match status" value="1"/>
</dbReference>
<dbReference type="Gene3D" id="6.20.10.30">
    <property type="match status" value="1"/>
</dbReference>
<dbReference type="Gene3D" id="1.10.150.20">
    <property type="entry name" value="5' to 3' exonuclease, C-terminal subdomain"/>
    <property type="match status" value="2"/>
</dbReference>
<dbReference type="Gene3D" id="3.40.50.10190">
    <property type="entry name" value="BRCT domain"/>
    <property type="match status" value="1"/>
</dbReference>
<dbReference type="Gene3D" id="3.30.470.30">
    <property type="entry name" value="DNA ligase/mRNA capping enzyme"/>
    <property type="match status" value="1"/>
</dbReference>
<dbReference type="Gene3D" id="1.10.287.610">
    <property type="entry name" value="Helix hairpin bin"/>
    <property type="match status" value="1"/>
</dbReference>
<dbReference type="Gene3D" id="2.40.50.140">
    <property type="entry name" value="Nucleic acid-binding proteins"/>
    <property type="match status" value="1"/>
</dbReference>
<dbReference type="HAMAP" id="MF_01588">
    <property type="entry name" value="DNA_ligase_A"/>
    <property type="match status" value="1"/>
</dbReference>
<dbReference type="InterPro" id="IPR001357">
    <property type="entry name" value="BRCT_dom"/>
</dbReference>
<dbReference type="InterPro" id="IPR036420">
    <property type="entry name" value="BRCT_dom_sf"/>
</dbReference>
<dbReference type="InterPro" id="IPR041663">
    <property type="entry name" value="DisA/LigA_HHH"/>
</dbReference>
<dbReference type="InterPro" id="IPR001679">
    <property type="entry name" value="DNA_ligase"/>
</dbReference>
<dbReference type="InterPro" id="IPR018239">
    <property type="entry name" value="DNA_ligase_AS"/>
</dbReference>
<dbReference type="InterPro" id="IPR033136">
    <property type="entry name" value="DNA_ligase_CS"/>
</dbReference>
<dbReference type="InterPro" id="IPR013839">
    <property type="entry name" value="DNAligase_adenylation"/>
</dbReference>
<dbReference type="InterPro" id="IPR013840">
    <property type="entry name" value="DNAligase_N"/>
</dbReference>
<dbReference type="InterPro" id="IPR003583">
    <property type="entry name" value="Hlx-hairpin-Hlx_DNA-bd_motif"/>
</dbReference>
<dbReference type="InterPro" id="IPR012340">
    <property type="entry name" value="NA-bd_OB-fold"/>
</dbReference>
<dbReference type="InterPro" id="IPR004150">
    <property type="entry name" value="NAD_DNA_ligase_OB"/>
</dbReference>
<dbReference type="InterPro" id="IPR010994">
    <property type="entry name" value="RuvA_2-like"/>
</dbReference>
<dbReference type="InterPro" id="IPR004149">
    <property type="entry name" value="Znf_DNAligase_C4"/>
</dbReference>
<dbReference type="NCBIfam" id="TIGR00575">
    <property type="entry name" value="dnlj"/>
    <property type="match status" value="1"/>
</dbReference>
<dbReference type="NCBIfam" id="NF005932">
    <property type="entry name" value="PRK07956.1"/>
    <property type="match status" value="1"/>
</dbReference>
<dbReference type="PANTHER" id="PTHR23389">
    <property type="entry name" value="CHROMOSOME TRANSMISSION FIDELITY FACTOR 18"/>
    <property type="match status" value="1"/>
</dbReference>
<dbReference type="PANTHER" id="PTHR23389:SF9">
    <property type="entry name" value="DNA LIGASE"/>
    <property type="match status" value="1"/>
</dbReference>
<dbReference type="Pfam" id="PF00533">
    <property type="entry name" value="BRCT"/>
    <property type="match status" value="1"/>
</dbReference>
<dbReference type="Pfam" id="PF01653">
    <property type="entry name" value="DNA_ligase_aden"/>
    <property type="match status" value="1"/>
</dbReference>
<dbReference type="Pfam" id="PF03120">
    <property type="entry name" value="DNA_ligase_OB"/>
    <property type="match status" value="1"/>
</dbReference>
<dbReference type="Pfam" id="PF03119">
    <property type="entry name" value="DNA_ligase_ZBD"/>
    <property type="match status" value="1"/>
</dbReference>
<dbReference type="Pfam" id="PF12826">
    <property type="entry name" value="HHH_2"/>
    <property type="match status" value="1"/>
</dbReference>
<dbReference type="Pfam" id="PF14520">
    <property type="entry name" value="HHH_5"/>
    <property type="match status" value="1"/>
</dbReference>
<dbReference type="PIRSF" id="PIRSF001604">
    <property type="entry name" value="LigA"/>
    <property type="match status" value="1"/>
</dbReference>
<dbReference type="SMART" id="SM00292">
    <property type="entry name" value="BRCT"/>
    <property type="match status" value="1"/>
</dbReference>
<dbReference type="SMART" id="SM00278">
    <property type="entry name" value="HhH1"/>
    <property type="match status" value="2"/>
</dbReference>
<dbReference type="SMART" id="SM00532">
    <property type="entry name" value="LIGANc"/>
    <property type="match status" value="1"/>
</dbReference>
<dbReference type="SUPFAM" id="SSF52113">
    <property type="entry name" value="BRCT domain"/>
    <property type="match status" value="1"/>
</dbReference>
<dbReference type="SUPFAM" id="SSF56091">
    <property type="entry name" value="DNA ligase/mRNA capping enzyme, catalytic domain"/>
    <property type="match status" value="1"/>
</dbReference>
<dbReference type="SUPFAM" id="SSF50249">
    <property type="entry name" value="Nucleic acid-binding proteins"/>
    <property type="match status" value="1"/>
</dbReference>
<dbReference type="SUPFAM" id="SSF47781">
    <property type="entry name" value="RuvA domain 2-like"/>
    <property type="match status" value="1"/>
</dbReference>
<dbReference type="PROSITE" id="PS50172">
    <property type="entry name" value="BRCT"/>
    <property type="match status" value="1"/>
</dbReference>
<dbReference type="PROSITE" id="PS01055">
    <property type="entry name" value="DNA_LIGASE_N1"/>
    <property type="match status" value="1"/>
</dbReference>
<dbReference type="PROSITE" id="PS01056">
    <property type="entry name" value="DNA_LIGASE_N2"/>
    <property type="match status" value="1"/>
</dbReference>
<feature type="chain" id="PRO_0000380486" description="DNA ligase">
    <location>
        <begin position="1"/>
        <end position="652"/>
    </location>
</feature>
<feature type="domain" description="BRCT" evidence="1">
    <location>
        <begin position="577"/>
        <end position="652"/>
    </location>
</feature>
<feature type="active site" description="N6-AMP-lysine intermediate" evidence="1">
    <location>
        <position position="109"/>
    </location>
</feature>
<feature type="binding site" evidence="1">
    <location>
        <begin position="29"/>
        <end position="33"/>
    </location>
    <ligand>
        <name>NAD(+)</name>
        <dbReference type="ChEBI" id="CHEBI:57540"/>
    </ligand>
</feature>
<feature type="binding site" evidence="1">
    <location>
        <begin position="78"/>
        <end position="79"/>
    </location>
    <ligand>
        <name>NAD(+)</name>
        <dbReference type="ChEBI" id="CHEBI:57540"/>
    </ligand>
</feature>
<feature type="binding site" evidence="1">
    <location>
        <position position="107"/>
    </location>
    <ligand>
        <name>NAD(+)</name>
        <dbReference type="ChEBI" id="CHEBI:57540"/>
    </ligand>
</feature>
<feature type="binding site" evidence="1">
    <location>
        <position position="130"/>
    </location>
    <ligand>
        <name>NAD(+)</name>
        <dbReference type="ChEBI" id="CHEBI:57540"/>
    </ligand>
</feature>
<feature type="binding site" evidence="1">
    <location>
        <position position="164"/>
    </location>
    <ligand>
        <name>NAD(+)</name>
        <dbReference type="ChEBI" id="CHEBI:57540"/>
    </ligand>
</feature>
<feature type="binding site" evidence="1">
    <location>
        <position position="278"/>
    </location>
    <ligand>
        <name>NAD(+)</name>
        <dbReference type="ChEBI" id="CHEBI:57540"/>
    </ligand>
</feature>
<feature type="binding site" evidence="1">
    <location>
        <position position="302"/>
    </location>
    <ligand>
        <name>NAD(+)</name>
        <dbReference type="ChEBI" id="CHEBI:57540"/>
    </ligand>
</feature>
<feature type="binding site" evidence="1">
    <location>
        <position position="395"/>
    </location>
    <ligand>
        <name>Zn(2+)</name>
        <dbReference type="ChEBI" id="CHEBI:29105"/>
    </ligand>
</feature>
<feature type="binding site" evidence="1">
    <location>
        <position position="398"/>
    </location>
    <ligand>
        <name>Zn(2+)</name>
        <dbReference type="ChEBI" id="CHEBI:29105"/>
    </ligand>
</feature>
<feature type="binding site" evidence="1">
    <location>
        <position position="413"/>
    </location>
    <ligand>
        <name>Zn(2+)</name>
        <dbReference type="ChEBI" id="CHEBI:29105"/>
    </ligand>
</feature>
<feature type="binding site" evidence="1">
    <location>
        <position position="418"/>
    </location>
    <ligand>
        <name>Zn(2+)</name>
        <dbReference type="ChEBI" id="CHEBI:29105"/>
    </ligand>
</feature>
<organism>
    <name type="scientific">Streptococcus pneumoniae (strain JJA)</name>
    <dbReference type="NCBI Taxonomy" id="488222"/>
    <lineage>
        <taxon>Bacteria</taxon>
        <taxon>Bacillati</taxon>
        <taxon>Bacillota</taxon>
        <taxon>Bacilli</taxon>
        <taxon>Lactobacillales</taxon>
        <taxon>Streptococcaceae</taxon>
        <taxon>Streptococcus</taxon>
    </lineage>
</organism>
<name>DNLJ_STRZJ</name>
<protein>
    <recommendedName>
        <fullName evidence="1">DNA ligase</fullName>
        <ecNumber evidence="1">6.5.1.2</ecNumber>
    </recommendedName>
    <alternativeName>
        <fullName evidence="1">Polydeoxyribonucleotide synthase [NAD(+)]</fullName>
    </alternativeName>
</protein>
<sequence length="652" mass="72254">MNKRMNELVALLNRYATEYYTSDNPSVADSEYDRLYRELVELETAYPEQVLADSPTHRVGGKVLDGFEKYSHQYPLYSLQDAFSREELDAFDARVRKEVAHPTYICELKIDGLSISLTYEKGILVAGVTRGDGSIGENITENLKRVKDIPLTLPEELDITVRGECYMPRASFDQVNQVRQENGEPEFANPRNAAAGTLRQLDTAVVAKRNLATFLYQEASPSTRDSQEKGLKYLEQLGFVVNPKRILAENIDEIWNFIQEVGQERENLPYDIDGVVIKVNDLASQEELGFTVKAPKWAVAYKFPAEEKEAQLLSVDWTVGRTGVVTPTANLTPVQLAGTTVSRATLHNVDYIAEKDIRKDDTVIVYKAGDIIPAVLRVVESKRVSEEKLDIPTNCPSCNSDLLHFEDEVALRCINPRCPAQIMEGLIHFASRDAMNITGLGPSIVEKLFAANLVKDVADIYRLQEEDFLLLEGVKEKSAAKLYQAIQASKENSAEKLLFGLGIRHVGSKVSQLLLQYFHSIENLSQADSEEVASIESLGGVIAKSLQTYFATEGSEILLRELKETGVNLDYKGQTVVADAALSGLTVVLTGKLERLKRSEAKSKLESLGAKVTGSISKKTDLVVVGADAGSKLQKAQELGIQVRDEAWLESL</sequence>
<comment type="function">
    <text evidence="1">DNA ligase that catalyzes the formation of phosphodiester linkages between 5'-phosphoryl and 3'-hydroxyl groups in double-stranded DNA using NAD as a coenzyme and as the energy source for the reaction. It is essential for DNA replication and repair of damaged DNA.</text>
</comment>
<comment type="catalytic activity">
    <reaction evidence="1">
        <text>NAD(+) + (deoxyribonucleotide)n-3'-hydroxyl + 5'-phospho-(deoxyribonucleotide)m = (deoxyribonucleotide)n+m + AMP + beta-nicotinamide D-nucleotide.</text>
        <dbReference type="EC" id="6.5.1.2"/>
    </reaction>
</comment>
<comment type="cofactor">
    <cofactor evidence="1">
        <name>Mg(2+)</name>
        <dbReference type="ChEBI" id="CHEBI:18420"/>
    </cofactor>
    <cofactor evidence="1">
        <name>Mn(2+)</name>
        <dbReference type="ChEBI" id="CHEBI:29035"/>
    </cofactor>
</comment>
<comment type="similarity">
    <text evidence="1">Belongs to the NAD-dependent DNA ligase family. LigA subfamily.</text>
</comment>
<proteinExistence type="inferred from homology"/>
<keyword id="KW-0227">DNA damage</keyword>
<keyword id="KW-0234">DNA repair</keyword>
<keyword id="KW-0235">DNA replication</keyword>
<keyword id="KW-0436">Ligase</keyword>
<keyword id="KW-0460">Magnesium</keyword>
<keyword id="KW-0464">Manganese</keyword>
<keyword id="KW-0479">Metal-binding</keyword>
<keyword id="KW-0520">NAD</keyword>
<keyword id="KW-0862">Zinc</keyword>
<accession>C1CEA4</accession>
<gene>
    <name evidence="1" type="primary">ligA</name>
    <name type="ordered locus">SPJ_1055</name>
</gene>
<evidence type="ECO:0000255" key="1">
    <source>
        <dbReference type="HAMAP-Rule" id="MF_01588"/>
    </source>
</evidence>